<sequence length="84" mass="9446">MSKEKVARFNKQHFVVGLKETLKALKKDQVTSLIIAEDVEVYLMTRVLSQINQKNIPVSFFKSKHALGKHVGINVNATIVALIK</sequence>
<proteinExistence type="inferred from homology"/>
<dbReference type="EMBL" id="CP000736">
    <property type="protein sequence ID" value="ABR51439.1"/>
    <property type="molecule type" value="Genomic_DNA"/>
</dbReference>
<dbReference type="SMR" id="A6TZ21"/>
<dbReference type="KEGG" id="sah:SaurJH1_0581"/>
<dbReference type="HOGENOM" id="CLU_168063_0_0_9"/>
<dbReference type="GO" id="GO:0003723">
    <property type="term" value="F:RNA binding"/>
    <property type="evidence" value="ECO:0007669"/>
    <property type="project" value="UniProtKB-UniRule"/>
</dbReference>
<dbReference type="Gene3D" id="3.30.1330.30">
    <property type="match status" value="1"/>
</dbReference>
<dbReference type="HAMAP" id="MF_00574">
    <property type="entry name" value="Ribosomal_eL8_Bact"/>
    <property type="match status" value="1"/>
</dbReference>
<dbReference type="InterPro" id="IPR029064">
    <property type="entry name" value="Ribosomal_eL30-like_sf"/>
</dbReference>
<dbReference type="InterPro" id="IPR004038">
    <property type="entry name" value="Ribosomal_eL8/eL30/eS12/Gad45"/>
</dbReference>
<dbReference type="InterPro" id="IPR023460">
    <property type="entry name" value="RNA_bf_YbxF-like"/>
</dbReference>
<dbReference type="NCBIfam" id="NF010123">
    <property type="entry name" value="PRK13600.1"/>
    <property type="match status" value="1"/>
</dbReference>
<dbReference type="Pfam" id="PF01248">
    <property type="entry name" value="Ribosomal_L7Ae"/>
    <property type="match status" value="1"/>
</dbReference>
<dbReference type="SUPFAM" id="SSF55315">
    <property type="entry name" value="L30e-like"/>
    <property type="match status" value="1"/>
</dbReference>
<protein>
    <recommendedName>
        <fullName evidence="1">RNA-binding protein SaurJH1_0581</fullName>
    </recommendedName>
    <alternativeName>
        <fullName evidence="2">Putative ribosomal protein L7Ae-like</fullName>
    </alternativeName>
    <alternativeName>
        <fullName evidence="1">Ribosomal protein eL8-like</fullName>
    </alternativeName>
</protein>
<gene>
    <name type="ordered locus">SaurJH1_0581</name>
</gene>
<keyword id="KW-0694">RNA-binding</keyword>
<organism>
    <name type="scientific">Staphylococcus aureus (strain JH1)</name>
    <dbReference type="NCBI Taxonomy" id="359787"/>
    <lineage>
        <taxon>Bacteria</taxon>
        <taxon>Bacillati</taxon>
        <taxon>Bacillota</taxon>
        <taxon>Bacilli</taxon>
        <taxon>Bacillales</taxon>
        <taxon>Staphylococcaceae</taxon>
        <taxon>Staphylococcus</taxon>
    </lineage>
</organism>
<reference key="1">
    <citation type="submission" date="2007-06" db="EMBL/GenBank/DDBJ databases">
        <title>Complete sequence of chromosome of Staphylococcus aureus subsp. aureus JH1.</title>
        <authorList>
            <consortium name="US DOE Joint Genome Institute"/>
            <person name="Copeland A."/>
            <person name="Lucas S."/>
            <person name="Lapidus A."/>
            <person name="Barry K."/>
            <person name="Detter J.C."/>
            <person name="Glavina del Rio T."/>
            <person name="Hammon N."/>
            <person name="Israni S."/>
            <person name="Dalin E."/>
            <person name="Tice H."/>
            <person name="Pitluck S."/>
            <person name="Chain P."/>
            <person name="Malfatti S."/>
            <person name="Shin M."/>
            <person name="Vergez L."/>
            <person name="Schmutz J."/>
            <person name="Larimer F."/>
            <person name="Land M."/>
            <person name="Hauser L."/>
            <person name="Kyrpides N."/>
            <person name="Ivanova N."/>
            <person name="Tomasz A."/>
            <person name="Richardson P."/>
        </authorList>
    </citation>
    <scope>NUCLEOTIDE SEQUENCE [LARGE SCALE GENOMIC DNA]</scope>
    <source>
        <strain>JH1</strain>
    </source>
</reference>
<evidence type="ECO:0000255" key="1">
    <source>
        <dbReference type="HAMAP-Rule" id="MF_00574"/>
    </source>
</evidence>
<evidence type="ECO:0000305" key="2"/>
<accession>A6TZ21</accession>
<feature type="chain" id="PRO_1000082331" description="RNA-binding protein SaurJH1_0581">
    <location>
        <begin position="1"/>
        <end position="84"/>
    </location>
</feature>
<comment type="similarity">
    <text evidence="1">Belongs to the eukaryotic ribosomal protein eL8 family.</text>
</comment>
<name>RXL7_STAA2</name>